<dbReference type="EC" id="3.1.3.11"/>
<dbReference type="EC" id="3.1.3.37"/>
<dbReference type="EMBL" id="D83512">
    <property type="protein sequence ID" value="BAA11934.1"/>
    <property type="status" value="ALT_SEQ"/>
    <property type="molecule type" value="Genomic_DNA"/>
</dbReference>
<dbReference type="EMBL" id="CP000100">
    <property type="protein sequence ID" value="ABB56537.1"/>
    <property type="molecule type" value="Genomic_DNA"/>
</dbReference>
<dbReference type="SMR" id="Q31QY2"/>
<dbReference type="STRING" id="1140.Synpcc7942_0505"/>
<dbReference type="PaxDb" id="1140-Synpcc7942_0505"/>
<dbReference type="KEGG" id="syf:Synpcc7942_0505"/>
<dbReference type="eggNOG" id="COG1494">
    <property type="taxonomic scope" value="Bacteria"/>
</dbReference>
<dbReference type="HOGENOM" id="CLU_054938_0_0_3"/>
<dbReference type="OrthoDB" id="9779353at2"/>
<dbReference type="BioCyc" id="SYNEL:SYNPCC7942_0505-MONOMER"/>
<dbReference type="BRENDA" id="3.1.3.11">
    <property type="organism ID" value="7781"/>
</dbReference>
<dbReference type="BRENDA" id="3.1.3.37">
    <property type="organism ID" value="7781"/>
</dbReference>
<dbReference type="SABIO-RK" id="Q31QY2"/>
<dbReference type="UniPathway" id="UPA00116"/>
<dbReference type="Proteomes" id="UP000889800">
    <property type="component" value="Chromosome"/>
</dbReference>
<dbReference type="GO" id="GO:0005829">
    <property type="term" value="C:cytosol"/>
    <property type="evidence" value="ECO:0007669"/>
    <property type="project" value="TreeGrafter"/>
</dbReference>
<dbReference type="GO" id="GO:0042132">
    <property type="term" value="F:fructose 1,6-bisphosphate 1-phosphatase activity"/>
    <property type="evidence" value="ECO:0007669"/>
    <property type="project" value="UniProtKB-EC"/>
</dbReference>
<dbReference type="GO" id="GO:0046872">
    <property type="term" value="F:metal ion binding"/>
    <property type="evidence" value="ECO:0007669"/>
    <property type="project" value="UniProtKB-KW"/>
</dbReference>
<dbReference type="GO" id="GO:0050278">
    <property type="term" value="F:sedoheptulose-bisphosphatase activity"/>
    <property type="evidence" value="ECO:0007669"/>
    <property type="project" value="UniProtKB-EC"/>
</dbReference>
<dbReference type="GO" id="GO:0030388">
    <property type="term" value="P:fructose 1,6-bisphosphate metabolic process"/>
    <property type="evidence" value="ECO:0007669"/>
    <property type="project" value="TreeGrafter"/>
</dbReference>
<dbReference type="GO" id="GO:0006094">
    <property type="term" value="P:gluconeogenesis"/>
    <property type="evidence" value="ECO:0007669"/>
    <property type="project" value="InterPro"/>
</dbReference>
<dbReference type="GO" id="GO:0006071">
    <property type="term" value="P:glycerol metabolic process"/>
    <property type="evidence" value="ECO:0007669"/>
    <property type="project" value="InterPro"/>
</dbReference>
<dbReference type="GO" id="GO:0019253">
    <property type="term" value="P:reductive pentose-phosphate cycle"/>
    <property type="evidence" value="ECO:0007669"/>
    <property type="project" value="UniProtKB-UniPathway"/>
</dbReference>
<dbReference type="CDD" id="cd01516">
    <property type="entry name" value="FBPase_glpX"/>
    <property type="match status" value="1"/>
</dbReference>
<dbReference type="FunFam" id="3.40.190.90:FF:000001">
    <property type="entry name" value="Fructose-1,6-bisphosphatase"/>
    <property type="match status" value="1"/>
</dbReference>
<dbReference type="Gene3D" id="3.40.190.90">
    <property type="match status" value="1"/>
</dbReference>
<dbReference type="Gene3D" id="3.30.540.10">
    <property type="entry name" value="Fructose-1,6-Bisphosphatase, subunit A, domain 1"/>
    <property type="match status" value="1"/>
</dbReference>
<dbReference type="InterPro" id="IPR004464">
    <property type="entry name" value="FBPase_class-2/SBPase"/>
</dbReference>
<dbReference type="NCBIfam" id="TIGR00330">
    <property type="entry name" value="glpX"/>
    <property type="match status" value="1"/>
</dbReference>
<dbReference type="PANTHER" id="PTHR30447:SF0">
    <property type="entry name" value="FRUCTOSE-1,6-BISPHOSPHATASE 1 CLASS 2-RELATED"/>
    <property type="match status" value="1"/>
</dbReference>
<dbReference type="PANTHER" id="PTHR30447">
    <property type="entry name" value="FRUCTOSE-1,6-BISPHOSPHATASE CLASS 2"/>
    <property type="match status" value="1"/>
</dbReference>
<dbReference type="Pfam" id="PF03320">
    <property type="entry name" value="FBPase_glpX"/>
    <property type="match status" value="1"/>
</dbReference>
<dbReference type="PIRSF" id="PIRSF004532">
    <property type="entry name" value="GlpX"/>
    <property type="match status" value="1"/>
</dbReference>
<dbReference type="SUPFAM" id="SSF56655">
    <property type="entry name" value="Carbohydrate phosphatase"/>
    <property type="match status" value="1"/>
</dbReference>
<evidence type="ECO:0000250" key="1"/>
<evidence type="ECO:0000269" key="2">
    <source>
    </source>
</evidence>
<evidence type="ECO:0000305" key="3"/>
<proteinExistence type="evidence at protein level"/>
<comment type="function">
    <text evidence="2">Catalyzes the hydrolysis of fructose 1,6-bisphosphate (Fru 1,6-P2) and sedoheptulose 1,7-bisphosphate (Sed 1,7-P2) to fructose 6-phosphate and sedoheptulose 7-phosphate, respectively.</text>
</comment>
<comment type="catalytic activity">
    <reaction>
        <text>beta-D-fructose 1,6-bisphosphate + H2O = beta-D-fructose 6-phosphate + phosphate</text>
        <dbReference type="Rhea" id="RHEA:11064"/>
        <dbReference type="ChEBI" id="CHEBI:15377"/>
        <dbReference type="ChEBI" id="CHEBI:32966"/>
        <dbReference type="ChEBI" id="CHEBI:43474"/>
        <dbReference type="ChEBI" id="CHEBI:57634"/>
        <dbReference type="EC" id="3.1.3.11"/>
    </reaction>
</comment>
<comment type="catalytic activity">
    <reaction>
        <text>D-sedoheptulose 1,7-bisphosphate + H2O = D-sedoheptulose 7-phosphate + phosphate</text>
        <dbReference type="Rhea" id="RHEA:17461"/>
        <dbReference type="ChEBI" id="CHEBI:15377"/>
        <dbReference type="ChEBI" id="CHEBI:43474"/>
        <dbReference type="ChEBI" id="CHEBI:57483"/>
        <dbReference type="ChEBI" id="CHEBI:58335"/>
        <dbReference type="EC" id="3.1.3.37"/>
    </reaction>
</comment>
<comment type="cofactor">
    <cofactor evidence="1">
        <name>Mn(2+)</name>
        <dbReference type="ChEBI" id="CHEBI:29035"/>
    </cofactor>
</comment>
<comment type="activity regulation">
    <text evidence="2">Inhibited by AMP and slightly innibited by hydrogen peroxyde.</text>
</comment>
<comment type="biophysicochemical properties">
    <kinetics>
        <KM evidence="2">52 uM for fructose-1,6-bisphosphate (at pH 8)</KM>
        <KM evidence="2">118 uM for sedoheptulose 1,7-bisphosphate (at pH 8)</KM>
        <Vmax evidence="2">11.7 umol/min/mg enzyme with fructose 1,6-bisphosphate as substrate (at pH 8)</Vmax>
        <Vmax evidence="2">12.1 umol/min/mg enzyme with sedoheptulose 1,7-bisphosphate as substrate (at pH 8)</Vmax>
    </kinetics>
</comment>
<comment type="pathway">
    <text>Carbohydrate biosynthesis; Calvin cycle.</text>
</comment>
<comment type="subunit">
    <text evidence="2">Homotetramer.</text>
</comment>
<comment type="similarity">
    <text evidence="3">Belongs to the FBPase class 2 family.</text>
</comment>
<comment type="sequence caution" evidence="3">
    <conflict type="erroneous termination">
        <sequence resource="EMBL-CDS" id="BAA11934"/>
    </conflict>
    <text>Truncated C-terminus.</text>
</comment>
<comment type="sequence caution" evidence="3">
    <conflict type="frameshift">
        <sequence resource="EMBL-CDS" id="BAA11934"/>
    </conflict>
</comment>
<name>FBSB_SYNE7</name>
<organism>
    <name type="scientific">Synechococcus elongatus (strain ATCC 33912 / PCC 7942 / FACHB-805)</name>
    <name type="common">Anacystis nidulans R2</name>
    <dbReference type="NCBI Taxonomy" id="1140"/>
    <lineage>
        <taxon>Bacteria</taxon>
        <taxon>Bacillati</taxon>
        <taxon>Cyanobacteriota</taxon>
        <taxon>Cyanophyceae</taxon>
        <taxon>Synechococcales</taxon>
        <taxon>Synechococcaceae</taxon>
        <taxon>Synechococcus</taxon>
    </lineage>
</organism>
<reference key="1">
    <citation type="journal article" date="1996" name="Arch. Biochem. Biophys.">
        <title>Molecular characterization and resistance to hydrogen peroxide of two fructose-1,6-bisphosphatases from Synechococcus PCC 7942.</title>
        <authorList>
            <person name="Tamoi M."/>
            <person name="Ishikawa T."/>
            <person name="Takeda T."/>
            <person name="Shigeoka S."/>
        </authorList>
    </citation>
    <scope>NUCLEOTIDE SEQUENCE [GENOMIC DNA]</scope>
    <scope>PROTEIN SEQUENCE OF 1-24</scope>
    <scope>FUNCTION</scope>
    <scope>SUBUNIT</scope>
    <scope>ACTIVITY REGULATION</scope>
    <scope>BIOPHYSICOCHEMICAL PROPERTIES</scope>
</reference>
<reference key="2">
    <citation type="submission" date="2005-08" db="EMBL/GenBank/DDBJ databases">
        <title>Complete sequence of chromosome 1 of Synechococcus elongatus PCC 7942.</title>
        <authorList>
            <consortium name="US DOE Joint Genome Institute"/>
            <person name="Copeland A."/>
            <person name="Lucas S."/>
            <person name="Lapidus A."/>
            <person name="Barry K."/>
            <person name="Detter J.C."/>
            <person name="Glavina T."/>
            <person name="Hammon N."/>
            <person name="Israni S."/>
            <person name="Pitluck S."/>
            <person name="Schmutz J."/>
            <person name="Larimer F."/>
            <person name="Land M."/>
            <person name="Kyrpides N."/>
            <person name="Lykidis A."/>
            <person name="Golden S."/>
            <person name="Richardson P."/>
        </authorList>
    </citation>
    <scope>NUCLEOTIDE SEQUENCE [LARGE SCALE GENOMIC DNA]</scope>
    <source>
        <strain>ATCC 33912 / PCC 7942 / FACHB-805</strain>
    </source>
</reference>
<keyword id="KW-0113">Calvin cycle</keyword>
<keyword id="KW-0119">Carbohydrate metabolism</keyword>
<keyword id="KW-0903">Direct protein sequencing</keyword>
<keyword id="KW-0378">Hydrolase</keyword>
<keyword id="KW-0464">Manganese</keyword>
<keyword id="KW-0479">Metal-binding</keyword>
<keyword id="KW-1185">Reference proteome</keyword>
<accession>Q31QY2</accession>
<accession>P96145</accession>
<protein>
    <recommendedName>
        <fullName>D-fructose 1,6-bisphosphatase class 2/sedoheptulose 1,7-bisphosphatase</fullName>
        <shortName>FBPase class 2/SBPase</shortName>
        <ecNumber>3.1.3.11</ecNumber>
        <ecNumber>3.1.3.37</ecNumber>
    </recommendedName>
    <alternativeName>
        <fullName>D-fructose-1,6-bisphosphate 1-phosphohydrolase class 2</fullName>
    </alternativeName>
    <alternativeName>
        <fullName>Fructose-1,6-bisphosphatase F-I</fullName>
    </alternativeName>
</protein>
<gene>
    <name type="ordered locus">Synpcc7942_0505</name>
</gene>
<sequence>MEKTIGLEIIEVVEQAAIASARLMGKGEKNEADRVAVEAMRVRMNQVEMLGRIVIGEGERDEAPMLYIGEEVGIYRDADKRAGVPAGKLVEIDIAVDPCEGTNLCAYGQPGSMAVLAISEKGGLFAAPDFYMKKLAAPPAAKGKVDINKSATENLKILSECLDRAIDELVVVVMDRPRHKELIQEIRQAGARVRLISDGDVSAAISCGFAGTNTHALMGIGAAPEGVISAAAMRCLGGHFQGQLIYDPEVVKTGLIGESRESNIARLQEMGITDPDRVYDANELASGQEVLFAACGITPGLLMEGVRFFKGGARTQSLVISSQSRTARFVDTVHMFDDVKTVSLR</sequence>
<feature type="chain" id="PRO_0000342732" description="D-fructose 1,6-bisphosphatase class 2/sedoheptulose 1,7-bisphosphatase">
    <location>
        <begin position="1"/>
        <end position="345"/>
    </location>
</feature>
<feature type="binding site" evidence="1">
    <location>
        <position position="33"/>
    </location>
    <ligand>
        <name>Mn(2+)</name>
        <dbReference type="ChEBI" id="CHEBI:29035"/>
        <label>1</label>
    </ligand>
</feature>
<feature type="binding site" evidence="1">
    <location>
        <position position="57"/>
    </location>
    <ligand>
        <name>Mn(2+)</name>
        <dbReference type="ChEBI" id="CHEBI:29035"/>
        <label>1</label>
    </ligand>
</feature>
<feature type="binding site" evidence="1">
    <location>
        <position position="97"/>
    </location>
    <ligand>
        <name>Mn(2+)</name>
        <dbReference type="ChEBI" id="CHEBI:29035"/>
        <label>2</label>
    </ligand>
</feature>
<feature type="binding site" evidence="1">
    <location>
        <begin position="100"/>
        <end position="102"/>
    </location>
    <ligand>
        <name>substrate</name>
    </ligand>
</feature>
<feature type="binding site" evidence="1">
    <location>
        <position position="100"/>
    </location>
    <ligand>
        <name>Mn(2+)</name>
        <dbReference type="ChEBI" id="CHEBI:29035"/>
        <label>2</label>
    </ligand>
</feature>
<feature type="binding site" evidence="1">
    <location>
        <position position="131"/>
    </location>
    <ligand>
        <name>substrate</name>
    </ligand>
</feature>
<feature type="binding site" evidence="1">
    <location>
        <begin position="176"/>
        <end position="178"/>
    </location>
    <ligand>
        <name>substrate</name>
    </ligand>
</feature>
<feature type="binding site" evidence="1">
    <location>
        <begin position="198"/>
        <end position="200"/>
    </location>
    <ligand>
        <name>substrate</name>
    </ligand>
</feature>
<feature type="binding site" evidence="1">
    <location>
        <position position="225"/>
    </location>
    <ligand>
        <name>Mn(2+)</name>
        <dbReference type="ChEBI" id="CHEBI:29035"/>
        <label>2</label>
    </ligand>
</feature>